<reference key="1">
    <citation type="journal article" date="1999" name="Genetics">
        <title>Divergence of the hyperthermophilic archaea Pyrococcus furiosus and P. horikoshii inferred from complete genomic sequences.</title>
        <authorList>
            <person name="Maeder D.L."/>
            <person name="Weiss R.B."/>
            <person name="Dunn D.M."/>
            <person name="Cherry J.L."/>
            <person name="Gonzalez J.M."/>
            <person name="DiRuggiero J."/>
            <person name="Robb F.T."/>
        </authorList>
    </citation>
    <scope>NUCLEOTIDE SEQUENCE [LARGE SCALE GENOMIC DNA]</scope>
    <source>
        <strain>ATCC 43587 / DSM 3638 / JCM 8422 / Vc1</strain>
    </source>
</reference>
<reference key="2">
    <citation type="journal article" date="2006" name="J. Bacteriol.">
        <title>Tungsten transport protein A (WtpA) in Pyrococcus furiosus: the first member of a new class of tungstate and molybdate transporters.</title>
        <authorList>
            <person name="Bevers L.E."/>
            <person name="Hagedoorn P.-L."/>
            <person name="Krijger G.C."/>
            <person name="Hagen W.R."/>
        </authorList>
    </citation>
    <scope>FUNCTION</scope>
    <scope>GENE NAME</scope>
    <scope>SUBUNIT</scope>
</reference>
<reference evidence="9" key="3">
    <citation type="journal article" date="2009" name="J. Biol. Inorg. Chem.">
        <title>Distorted octahedral coordination of tungstate in a subfamily of specific binding proteins.</title>
        <authorList>
            <person name="Hollenstein K."/>
            <person name="Comellas-Bigler M."/>
            <person name="Bevers L.E."/>
            <person name="Feiters M.C."/>
            <person name="Meyer-Klaucke W."/>
            <person name="Hagedoorn P.L."/>
            <person name="Locher K.P."/>
        </authorList>
    </citation>
    <scope>X-RAY CRYSTALLOGRAPHY (1.60 ANGSTROMS) OF 32-324 IN COMPLEX WITH TUNGSTATE</scope>
</reference>
<sequence>MREGGVMKKRLLALIVAFAVLTAGCLGSESKEVTLIVFHAGSLSVPFQEVEKEFSEYAERNLGIKVSFQDEASGSVMAVRKVTDLGRKADVIGVADYTLIPQLLIPNYTDFYVLFATNEIVIAFTDKSRYVEEMKSNPDKWYEILAREDVRFGFSDPNQDPCGYRSLMVIKLADLYYGKEIFKELIEENTNIYSNGTQIYAPKEITVNPGKIVIRPKETDLLGLVESGSIDYIFIYKSVAKQHNLSYITLPSEINLGDFSKEKFYGQISITLGSTGKTIKAKPIVYGVTVLKDAPNREVAIEFLRYLLSENGKRIFEKNHQDFLEPPIAFGNVPEELKPLVSIEK</sequence>
<proteinExistence type="evidence at protein level"/>
<accession>Q8U4K5</accession>
<comment type="function">
    <text evidence="5">Part of the ABC transporter complex WtpABC involved in molybdate/tungstate import. Binds tungstate and molybdate, with a preference for tungstate.</text>
</comment>
<comment type="subunit">
    <text evidence="5 8">Monomer (PubMed:16952940). The complex is composed of two ATP-binding proteins (WtpC), two transmembrane proteins (WtpB) and a solute-binding protein (WtpA) (Probable).</text>
</comment>
<comment type="subcellular location">
    <subcellularLocation>
        <location evidence="4">Cell membrane</location>
        <topology evidence="1">Peripheral membrane protein</topology>
    </subcellularLocation>
</comment>
<comment type="similarity">
    <text evidence="8">Belongs to the bacterial solute-binding protein 1 family. WtpA subfamily.</text>
</comment>
<protein>
    <recommendedName>
        <fullName evidence="8">Molybdate/tungstate-binding protein WtpA</fullName>
    </recommendedName>
</protein>
<keyword id="KW-0002">3D-structure</keyword>
<keyword id="KW-1003">Cell membrane</keyword>
<keyword id="KW-0472">Membrane</keyword>
<keyword id="KW-0479">Metal-binding</keyword>
<keyword id="KW-0500">Molybdenum</keyword>
<keyword id="KW-1185">Reference proteome</keyword>
<keyword id="KW-0732">Signal</keyword>
<keyword id="KW-0813">Transport</keyword>
<keyword id="KW-0826">Tungsten</keyword>
<dbReference type="EMBL" id="AE009950">
    <property type="protein sequence ID" value="AAL80204.1"/>
    <property type="molecule type" value="Genomic_DNA"/>
</dbReference>
<dbReference type="PDB" id="3CG1">
    <property type="method" value="X-ray"/>
    <property type="resolution" value="1.60 A"/>
    <property type="chains" value="A/B=32-324"/>
</dbReference>
<dbReference type="PDBsum" id="3CG1"/>
<dbReference type="SMR" id="Q8U4K5"/>
<dbReference type="STRING" id="186497.PF0080"/>
<dbReference type="TCDB" id="3.A.1.6.5">
    <property type="family name" value="the atp-binding cassette (abc) superfamily"/>
</dbReference>
<dbReference type="PaxDb" id="186497-PF0080"/>
<dbReference type="KEGG" id="pfu:PF0080"/>
<dbReference type="PATRIC" id="fig|186497.12.peg.84"/>
<dbReference type="eggNOG" id="arCOG00219">
    <property type="taxonomic scope" value="Archaea"/>
</dbReference>
<dbReference type="HOGENOM" id="CLU_055936_0_0_2"/>
<dbReference type="PhylomeDB" id="Q8U4K5"/>
<dbReference type="BRENDA" id="7.3.2.6">
    <property type="organism ID" value="5243"/>
</dbReference>
<dbReference type="EvolutionaryTrace" id="Q8U4K5"/>
<dbReference type="Proteomes" id="UP000001013">
    <property type="component" value="Chromosome"/>
</dbReference>
<dbReference type="GO" id="GO:0005886">
    <property type="term" value="C:plasma membrane"/>
    <property type="evidence" value="ECO:0007669"/>
    <property type="project" value="UniProtKB-SubCell"/>
</dbReference>
<dbReference type="GO" id="GO:0046872">
    <property type="term" value="F:metal ion binding"/>
    <property type="evidence" value="ECO:0007669"/>
    <property type="project" value="UniProtKB-KW"/>
</dbReference>
<dbReference type="GO" id="GO:0030973">
    <property type="term" value="F:molybdate ion binding"/>
    <property type="evidence" value="ECO:0007669"/>
    <property type="project" value="TreeGrafter"/>
</dbReference>
<dbReference type="GO" id="GO:1901359">
    <property type="term" value="F:tungstate binding"/>
    <property type="evidence" value="ECO:0007669"/>
    <property type="project" value="InterPro"/>
</dbReference>
<dbReference type="GO" id="GO:0015689">
    <property type="term" value="P:molybdate ion transport"/>
    <property type="evidence" value="ECO:0007669"/>
    <property type="project" value="TreeGrafter"/>
</dbReference>
<dbReference type="CDD" id="cd13540">
    <property type="entry name" value="PBP2_ModA_WtpA"/>
    <property type="match status" value="1"/>
</dbReference>
<dbReference type="FunFam" id="3.40.190.10:FF:000440">
    <property type="entry name" value="Uncharacterized solute-binding protein MA_0280"/>
    <property type="match status" value="1"/>
</dbReference>
<dbReference type="Gene3D" id="3.40.190.10">
    <property type="entry name" value="Periplasmic binding protein-like II"/>
    <property type="match status" value="2"/>
</dbReference>
<dbReference type="InterPro" id="IPR022498">
    <property type="entry name" value="ABC_trnspt_W-bd_WtpA"/>
</dbReference>
<dbReference type="InterPro" id="IPR050682">
    <property type="entry name" value="ModA/WtpA"/>
</dbReference>
<dbReference type="NCBIfam" id="NF003196">
    <property type="entry name" value="PRK04168.1"/>
    <property type="match status" value="1"/>
</dbReference>
<dbReference type="NCBIfam" id="TIGR03730">
    <property type="entry name" value="tungstate_WtpA"/>
    <property type="match status" value="1"/>
</dbReference>
<dbReference type="PANTHER" id="PTHR30632">
    <property type="entry name" value="MOLYBDATE-BINDING PERIPLASMIC PROTEIN"/>
    <property type="match status" value="1"/>
</dbReference>
<dbReference type="PANTHER" id="PTHR30632:SF16">
    <property type="entry name" value="MOLYBDATE_TUNGSTATE-BINDING PROTEIN WTPA"/>
    <property type="match status" value="1"/>
</dbReference>
<dbReference type="Pfam" id="PF13531">
    <property type="entry name" value="SBP_bac_11"/>
    <property type="match status" value="1"/>
</dbReference>
<dbReference type="SUPFAM" id="SSF53850">
    <property type="entry name" value="Periplasmic binding protein-like II"/>
    <property type="match status" value="1"/>
</dbReference>
<dbReference type="PROSITE" id="PS51257">
    <property type="entry name" value="PROKAR_LIPOPROTEIN"/>
    <property type="match status" value="1"/>
</dbReference>
<feature type="signal peptide" evidence="3">
    <location>
        <begin position="1"/>
        <end position="27"/>
    </location>
</feature>
<feature type="chain" id="PRO_0000159723" description="Molybdate/tungstate-binding protein WtpA">
    <location>
        <begin position="28"/>
        <end position="345"/>
    </location>
</feature>
<feature type="binding site" evidence="2">
    <location>
        <begin position="41"/>
        <end position="42"/>
    </location>
    <ligand>
        <name>molybdate</name>
        <dbReference type="ChEBI" id="CHEBI:36264"/>
    </ligand>
</feature>
<feature type="binding site" evidence="6 9">
    <location>
        <begin position="41"/>
        <end position="42"/>
    </location>
    <ligand>
        <name>tungstate</name>
        <dbReference type="ChEBI" id="CHEBI:46502"/>
    </ligand>
</feature>
<feature type="binding site" evidence="2">
    <location>
        <position position="75"/>
    </location>
    <ligand>
        <name>molybdate</name>
        <dbReference type="ChEBI" id="CHEBI:36264"/>
    </ligand>
</feature>
<feature type="binding site" evidence="6 9">
    <location>
        <position position="75"/>
    </location>
    <ligand>
        <name>tungstate</name>
        <dbReference type="ChEBI" id="CHEBI:46502"/>
    </ligand>
</feature>
<feature type="binding site" evidence="2">
    <location>
        <begin position="160"/>
        <end position="162"/>
    </location>
    <ligand>
        <name>molybdate</name>
        <dbReference type="ChEBI" id="CHEBI:36264"/>
    </ligand>
</feature>
<feature type="binding site" evidence="6 9">
    <location>
        <begin position="160"/>
        <end position="162"/>
    </location>
    <ligand>
        <name>tungstate</name>
        <dbReference type="ChEBI" id="CHEBI:46502"/>
    </ligand>
</feature>
<feature type="binding site" evidence="2">
    <location>
        <position position="218"/>
    </location>
    <ligand>
        <name>molybdate</name>
        <dbReference type="ChEBI" id="CHEBI:36264"/>
    </ligand>
</feature>
<feature type="binding site" evidence="6 9">
    <location>
        <position position="218"/>
    </location>
    <ligand>
        <name>tungstate</name>
        <dbReference type="ChEBI" id="CHEBI:46502"/>
    </ligand>
</feature>
<feature type="binding site" evidence="2">
    <location>
        <position position="236"/>
    </location>
    <ligand>
        <name>molybdate</name>
        <dbReference type="ChEBI" id="CHEBI:36264"/>
    </ligand>
</feature>
<feature type="binding site" evidence="6 9">
    <location>
        <position position="236"/>
    </location>
    <ligand>
        <name>tungstate</name>
        <dbReference type="ChEBI" id="CHEBI:46502"/>
    </ligand>
</feature>
<feature type="strand" evidence="10">
    <location>
        <begin position="33"/>
        <end position="40"/>
    </location>
</feature>
<feature type="helix" evidence="10">
    <location>
        <begin position="41"/>
        <end position="43"/>
    </location>
</feature>
<feature type="helix" evidence="10">
    <location>
        <begin position="44"/>
        <end position="62"/>
    </location>
</feature>
<feature type="strand" evidence="10">
    <location>
        <begin position="66"/>
        <end position="73"/>
    </location>
</feature>
<feature type="helix" evidence="10">
    <location>
        <begin position="75"/>
        <end position="83"/>
    </location>
</feature>
<feature type="strand" evidence="10">
    <location>
        <begin position="90"/>
        <end position="96"/>
    </location>
</feature>
<feature type="helix" evidence="10">
    <location>
        <begin position="99"/>
        <end position="103"/>
    </location>
</feature>
<feature type="turn" evidence="10">
    <location>
        <begin position="104"/>
        <end position="108"/>
    </location>
</feature>
<feature type="strand" evidence="10">
    <location>
        <begin position="113"/>
        <end position="117"/>
    </location>
</feature>
<feature type="strand" evidence="10">
    <location>
        <begin position="120"/>
        <end position="124"/>
    </location>
</feature>
<feature type="helix" evidence="10">
    <location>
        <begin position="131"/>
        <end position="136"/>
    </location>
</feature>
<feature type="helix" evidence="10">
    <location>
        <begin position="138"/>
        <end position="140"/>
    </location>
</feature>
<feature type="helix" evidence="10">
    <location>
        <begin position="141"/>
        <end position="145"/>
    </location>
</feature>
<feature type="strand" evidence="10">
    <location>
        <begin position="152"/>
        <end position="155"/>
    </location>
</feature>
<feature type="turn" evidence="10">
    <location>
        <begin position="157"/>
        <end position="159"/>
    </location>
</feature>
<feature type="helix" evidence="10">
    <location>
        <begin position="161"/>
        <end position="177"/>
    </location>
</feature>
<feature type="helix" evidence="10">
    <location>
        <begin position="181"/>
        <end position="185"/>
    </location>
</feature>
<feature type="turn" evidence="10">
    <location>
        <begin position="186"/>
        <end position="189"/>
    </location>
</feature>
<feature type="strand" evidence="10">
    <location>
        <begin position="193"/>
        <end position="195"/>
    </location>
</feature>
<feature type="strand" evidence="10">
    <location>
        <begin position="198"/>
        <end position="201"/>
    </location>
</feature>
<feature type="turn" evidence="10">
    <location>
        <begin position="209"/>
        <end position="211"/>
    </location>
</feature>
<feature type="strand" evidence="10">
    <location>
        <begin position="212"/>
        <end position="217"/>
    </location>
</feature>
<feature type="helix" evidence="10">
    <location>
        <begin position="218"/>
        <end position="221"/>
    </location>
</feature>
<feature type="helix" evidence="10">
    <location>
        <begin position="222"/>
        <end position="226"/>
    </location>
</feature>
<feature type="strand" evidence="10">
    <location>
        <begin position="229"/>
        <end position="236"/>
    </location>
</feature>
<feature type="helix" evidence="10">
    <location>
        <begin position="237"/>
        <end position="242"/>
    </location>
</feature>
<feature type="strand" evidence="10">
    <location>
        <begin position="246"/>
        <end position="249"/>
    </location>
</feature>
<feature type="turn" evidence="10">
    <location>
        <begin position="252"/>
        <end position="254"/>
    </location>
</feature>
<feature type="helix" evidence="10">
    <location>
        <begin position="259"/>
        <end position="261"/>
    </location>
</feature>
<feature type="helix" evidence="10">
    <location>
        <begin position="262"/>
        <end position="265"/>
    </location>
</feature>
<feature type="strand" evidence="10">
    <location>
        <begin position="269"/>
        <end position="272"/>
    </location>
</feature>
<feature type="turn" evidence="10">
    <location>
        <begin position="273"/>
        <end position="275"/>
    </location>
</feature>
<feature type="strand" evidence="10">
    <location>
        <begin position="278"/>
        <end position="280"/>
    </location>
</feature>
<feature type="strand" evidence="10">
    <location>
        <begin position="285"/>
        <end position="290"/>
    </location>
</feature>
<feature type="helix" evidence="10">
    <location>
        <begin position="297"/>
        <end position="308"/>
    </location>
</feature>
<feature type="helix" evidence="10">
    <location>
        <begin position="310"/>
        <end position="318"/>
    </location>
</feature>
<name>WTPA_PYRFU</name>
<organism>
    <name type="scientific">Pyrococcus furiosus (strain ATCC 43587 / DSM 3638 / JCM 8422 / Vc1)</name>
    <dbReference type="NCBI Taxonomy" id="186497"/>
    <lineage>
        <taxon>Archaea</taxon>
        <taxon>Methanobacteriati</taxon>
        <taxon>Methanobacteriota</taxon>
        <taxon>Thermococci</taxon>
        <taxon>Thermococcales</taxon>
        <taxon>Thermococcaceae</taxon>
        <taxon>Pyrococcus</taxon>
    </lineage>
</organism>
<gene>
    <name evidence="7" type="primary">wtpA</name>
    <name type="ordered locus">PF0080</name>
</gene>
<evidence type="ECO:0000250" key="1"/>
<evidence type="ECO:0000250" key="2">
    <source>
        <dbReference type="UniProtKB" id="O30142"/>
    </source>
</evidence>
<evidence type="ECO:0000255" key="3"/>
<evidence type="ECO:0000255" key="4">
    <source>
        <dbReference type="PROSITE-ProRule" id="PRU00303"/>
    </source>
</evidence>
<evidence type="ECO:0000269" key="5">
    <source>
    </source>
</evidence>
<evidence type="ECO:0000269" key="6">
    <source>
    </source>
</evidence>
<evidence type="ECO:0000303" key="7">
    <source>
    </source>
</evidence>
<evidence type="ECO:0000305" key="8"/>
<evidence type="ECO:0007744" key="9">
    <source>
        <dbReference type="PDB" id="3CG1"/>
    </source>
</evidence>
<evidence type="ECO:0007829" key="10">
    <source>
        <dbReference type="PDB" id="3CG1"/>
    </source>
</evidence>